<accession>C1EU02</accession>
<comment type="subcellular location">
    <subcellularLocation>
        <location evidence="1">Spore core</location>
    </subcellularLocation>
</comment>
<comment type="induction">
    <text evidence="1">Expressed only in the forespore compartment of sporulating cells.</text>
</comment>
<comment type="similarity">
    <text evidence="1">Belongs to the SspI family.</text>
</comment>
<gene>
    <name evidence="1" type="primary">sspI</name>
    <name type="ordered locus">BCA_4669</name>
</gene>
<evidence type="ECO:0000255" key="1">
    <source>
        <dbReference type="HAMAP-Rule" id="MF_00669"/>
    </source>
</evidence>
<proteinExistence type="inferred from homology"/>
<reference key="1">
    <citation type="submission" date="2009-02" db="EMBL/GenBank/DDBJ databases">
        <title>Genome sequence of Bacillus cereus 03BB102.</title>
        <authorList>
            <person name="Dodson R.J."/>
            <person name="Jackson P."/>
            <person name="Munk A.C."/>
            <person name="Brettin T."/>
            <person name="Bruce D."/>
            <person name="Detter C."/>
            <person name="Tapia R."/>
            <person name="Han C."/>
            <person name="Sutton G."/>
            <person name="Sims D."/>
        </authorList>
    </citation>
    <scope>NUCLEOTIDE SEQUENCE [LARGE SCALE GENOMIC DNA]</scope>
    <source>
        <strain>03BB102</strain>
    </source>
</reference>
<dbReference type="EMBL" id="CP001407">
    <property type="protein sequence ID" value="ACO29138.1"/>
    <property type="molecule type" value="Genomic_DNA"/>
</dbReference>
<dbReference type="RefSeq" id="WP_000009513.1">
    <property type="nucleotide sequence ID" value="NZ_CP009318.1"/>
</dbReference>
<dbReference type="SMR" id="C1EU02"/>
<dbReference type="GeneID" id="93006545"/>
<dbReference type="KEGG" id="bcx:BCA_4669"/>
<dbReference type="PATRIC" id="fig|572264.18.peg.4618"/>
<dbReference type="Proteomes" id="UP000002210">
    <property type="component" value="Chromosome"/>
</dbReference>
<dbReference type="GO" id="GO:0030436">
    <property type="term" value="P:asexual sporulation"/>
    <property type="evidence" value="ECO:0007669"/>
    <property type="project" value="UniProtKB-UniRule"/>
</dbReference>
<dbReference type="GO" id="GO:0030435">
    <property type="term" value="P:sporulation resulting in formation of a cellular spore"/>
    <property type="evidence" value="ECO:0007669"/>
    <property type="project" value="UniProtKB-KW"/>
</dbReference>
<dbReference type="HAMAP" id="MF_00669">
    <property type="entry name" value="SspI"/>
    <property type="match status" value="1"/>
</dbReference>
<dbReference type="InterPro" id="IPR017525">
    <property type="entry name" value="SspI"/>
</dbReference>
<dbReference type="NCBIfam" id="TIGR03092">
    <property type="entry name" value="SASP_sspI"/>
    <property type="match status" value="1"/>
</dbReference>
<dbReference type="Pfam" id="PF14098">
    <property type="entry name" value="SSPI"/>
    <property type="match status" value="1"/>
</dbReference>
<keyword id="KW-0749">Sporulation</keyword>
<organism>
    <name type="scientific">Bacillus cereus (strain 03BB102)</name>
    <dbReference type="NCBI Taxonomy" id="572264"/>
    <lineage>
        <taxon>Bacteria</taxon>
        <taxon>Bacillati</taxon>
        <taxon>Bacillota</taxon>
        <taxon>Bacilli</taxon>
        <taxon>Bacillales</taxon>
        <taxon>Bacillaceae</taxon>
        <taxon>Bacillus</taxon>
        <taxon>Bacillus cereus group</taxon>
    </lineage>
</organism>
<name>SSPI_BACC3</name>
<sequence length="69" mass="7687">MSFNLRGAVLANVSGNTQDQLQETIVDAIQSGEEKMLPGLGVLFEVIWKNADENEKHEMLETLEQGLKK</sequence>
<protein>
    <recommendedName>
        <fullName evidence="1">Small, acid-soluble spore protein I</fullName>
        <shortName evidence="1">SASP I</shortName>
    </recommendedName>
</protein>
<feature type="chain" id="PRO_1000147655" description="Small, acid-soluble spore protein I">
    <location>
        <begin position="1"/>
        <end position="69"/>
    </location>
</feature>